<proteinExistence type="predicted"/>
<accession>P30813</accession>
<gene>
    <name type="primary">nodK</name>
</gene>
<name>NODK_BRASP</name>
<keyword id="KW-0536">Nodulation</keyword>
<feature type="chain" id="PRO_0000096908" description="Nodulation protein K">
    <location>
        <begin position="1"/>
        <end position="136"/>
    </location>
</feature>
<sequence>MARLFIAVIAIQGASKMHRTEVDLVPVGCVLDELSRIDGLPRDATAPILILDEAEPLHAADRLRAIGSLPWDVRACFGHGIGRKDAREMRDRLAANEAAIPIRSALARSARRAERGCRMPAHFRLITGSANSEFLT</sequence>
<dbReference type="EMBL" id="X03720">
    <property type="protein sequence ID" value="CAA27347.1"/>
    <property type="molecule type" value="Genomic_DNA"/>
</dbReference>
<organism>
    <name type="scientific">Bradyrhizobium sp. (strain ANU 289)</name>
    <dbReference type="NCBI Taxonomy" id="186901"/>
    <lineage>
        <taxon>Bacteria</taxon>
        <taxon>Pseudomonadati</taxon>
        <taxon>Pseudomonadota</taxon>
        <taxon>Alphaproteobacteria</taxon>
        <taxon>Hyphomicrobiales</taxon>
        <taxon>Nitrobacteraceae</taxon>
        <taxon>Bradyrhizobium</taxon>
    </lineage>
</organism>
<reference key="1">
    <citation type="journal article" date="1986" name="Nucleic Acids Res.">
        <title>Conserved nodulation genes from the non-legume symbiont Bradyrhizobium sp. (Parasponia).</title>
        <authorList>
            <person name="Scott K.F."/>
        </authorList>
    </citation>
    <scope>NUCLEOTIDE SEQUENCE [GENOMIC DNA]</scope>
</reference>
<protein>
    <recommendedName>
        <fullName>Nodulation protein K</fullName>
    </recommendedName>
</protein>